<name>FUR_YERPE</name>
<gene>
    <name type="primary">fur</name>
    <name type="ordered locus">YPO2634</name>
    <name type="ordered locus">y1208</name>
    <name type="ordered locus">YP_1081</name>
</gene>
<evidence type="ECO:0000250" key="1"/>
<evidence type="ECO:0000305" key="2"/>
<organism>
    <name type="scientific">Yersinia pestis</name>
    <dbReference type="NCBI Taxonomy" id="632"/>
    <lineage>
        <taxon>Bacteria</taxon>
        <taxon>Pseudomonadati</taxon>
        <taxon>Pseudomonadota</taxon>
        <taxon>Gammaproteobacteria</taxon>
        <taxon>Enterobacterales</taxon>
        <taxon>Yersiniaceae</taxon>
        <taxon>Yersinia</taxon>
    </lineage>
</organism>
<feature type="chain" id="PRO_0000095588" description="Ferric uptake regulation protein">
    <location>
        <begin position="1"/>
        <end position="148"/>
    </location>
</feature>
<feature type="region of interest" description="DNA-binding" evidence="1">
    <location>
        <begin position="1"/>
        <end position="84"/>
    </location>
</feature>
<feature type="region of interest" description="Dimerization" evidence="1">
    <location>
        <begin position="85"/>
        <end position="142"/>
    </location>
</feature>
<feature type="binding site" evidence="1">
    <location>
        <position position="33"/>
    </location>
    <ligand>
        <name>Zn(2+)</name>
        <dbReference type="ChEBI" id="CHEBI:29105"/>
    </ligand>
</feature>
<feature type="binding site" evidence="1">
    <location>
        <position position="81"/>
    </location>
    <ligand>
        <name>Zn(2+)</name>
        <dbReference type="ChEBI" id="CHEBI:29105"/>
    </ligand>
</feature>
<feature type="binding site" evidence="1">
    <location>
        <position position="87"/>
    </location>
    <ligand>
        <name>Fe cation</name>
        <dbReference type="ChEBI" id="CHEBI:24875"/>
    </ligand>
</feature>
<feature type="binding site" evidence="1">
    <location>
        <position position="89"/>
    </location>
    <ligand>
        <name>Fe cation</name>
        <dbReference type="ChEBI" id="CHEBI:24875"/>
    </ligand>
</feature>
<feature type="binding site" evidence="1">
    <location>
        <position position="90"/>
    </location>
    <ligand>
        <name>Zn(2+)</name>
        <dbReference type="ChEBI" id="CHEBI:29105"/>
    </ligand>
</feature>
<feature type="binding site" evidence="1">
    <location>
        <position position="93"/>
    </location>
    <ligand>
        <name>Zn(2+)</name>
        <dbReference type="ChEBI" id="CHEBI:29105"/>
    </ligand>
</feature>
<feature type="binding site" evidence="1">
    <location>
        <position position="96"/>
    </location>
    <ligand>
        <name>Zn(2+)</name>
        <dbReference type="ChEBI" id="CHEBI:29105"/>
    </ligand>
</feature>
<feature type="binding site" evidence="1">
    <location>
        <position position="101"/>
    </location>
    <ligand>
        <name>Zn(2+)</name>
        <dbReference type="ChEBI" id="CHEBI:29105"/>
    </ligand>
</feature>
<feature type="binding site" evidence="1">
    <location>
        <position position="108"/>
    </location>
    <ligand>
        <name>Fe cation</name>
        <dbReference type="ChEBI" id="CHEBI:24875"/>
    </ligand>
</feature>
<feature type="binding site" evidence="1">
    <location>
        <position position="125"/>
    </location>
    <ligand>
        <name>Fe cation</name>
        <dbReference type="ChEBI" id="CHEBI:24875"/>
    </ligand>
</feature>
<feature type="sequence conflict" description="In Ref. 6; AAS61329." evidence="2" ref="6">
    <original>K</original>
    <variation>T</variation>
    <location>
        <position position="21"/>
    </location>
</feature>
<feature type="sequence conflict" description="In Ref. 1." evidence="2" ref="1">
    <original>VLN</original>
    <variation>CSE</variation>
    <location>
        <begin position="58"/>
        <end position="60"/>
    </location>
</feature>
<sequence length="148" mass="16728">MTDNNKALKNAGLKVTLPRLKILEVLQNPACHHVSAEDLYKILIDIGEEIGLATVYRVLNQFDDAGIVTRHNFEGGKSVFELTQQHHHDHLICLDCGKVIEFSNESIESLQREIAKQHGIKLTNHSLYLYGHCETGNCREDESAHSKR</sequence>
<proteinExistence type="inferred from homology"/>
<dbReference type="EMBL" id="Z12101">
    <property type="protein sequence ID" value="CAA78082.1"/>
    <property type="molecule type" value="Genomic_DNA"/>
</dbReference>
<dbReference type="EMBL" id="AL590842">
    <property type="protein sequence ID" value="CAL21256.1"/>
    <property type="molecule type" value="Genomic_DNA"/>
</dbReference>
<dbReference type="EMBL" id="AE009952">
    <property type="protein sequence ID" value="AAM84784.1"/>
    <property type="molecule type" value="Genomic_DNA"/>
</dbReference>
<dbReference type="EMBL" id="AE017042">
    <property type="protein sequence ID" value="AAS61329.1"/>
    <property type="molecule type" value="Genomic_DNA"/>
</dbReference>
<dbReference type="PIR" id="AE0321">
    <property type="entry name" value="AE0321"/>
</dbReference>
<dbReference type="PIR" id="S70733">
    <property type="entry name" value="S70733"/>
</dbReference>
<dbReference type="RefSeq" id="WP_002210357.1">
    <property type="nucleotide sequence ID" value="NZ_WUCM01000102.1"/>
</dbReference>
<dbReference type="RefSeq" id="YP_002347588.1">
    <property type="nucleotide sequence ID" value="NC_003143.1"/>
</dbReference>
<dbReference type="SMR" id="P33086"/>
<dbReference type="STRING" id="214092.YPO2634"/>
<dbReference type="PaxDb" id="214092-YPO2634"/>
<dbReference type="DNASU" id="1146155"/>
<dbReference type="EnsemblBacteria" id="AAS61329">
    <property type="protein sequence ID" value="AAS61329"/>
    <property type="gene ID" value="YP_1081"/>
</dbReference>
<dbReference type="GeneID" id="57976058"/>
<dbReference type="KEGG" id="ype:YPO2634"/>
<dbReference type="KEGG" id="ypk:y1208"/>
<dbReference type="KEGG" id="ypm:YP_1081"/>
<dbReference type="PATRIC" id="fig|214092.21.peg.3066"/>
<dbReference type="eggNOG" id="COG0735">
    <property type="taxonomic scope" value="Bacteria"/>
</dbReference>
<dbReference type="HOGENOM" id="CLU_096072_3_3_6"/>
<dbReference type="OMA" id="YLYGVCT"/>
<dbReference type="OrthoDB" id="8659436at2"/>
<dbReference type="Proteomes" id="UP000000815">
    <property type="component" value="Chromosome"/>
</dbReference>
<dbReference type="Proteomes" id="UP000001019">
    <property type="component" value="Chromosome"/>
</dbReference>
<dbReference type="Proteomes" id="UP000002490">
    <property type="component" value="Chromosome"/>
</dbReference>
<dbReference type="CollecTF" id="EXPREG_00000a20"/>
<dbReference type="GO" id="GO:0005829">
    <property type="term" value="C:cytosol"/>
    <property type="evidence" value="ECO:0000318"/>
    <property type="project" value="GO_Central"/>
</dbReference>
<dbReference type="GO" id="GO:0032993">
    <property type="term" value="C:protein-DNA complex"/>
    <property type="evidence" value="ECO:0000353"/>
    <property type="project" value="CollecTF"/>
</dbReference>
<dbReference type="GO" id="GO:0003700">
    <property type="term" value="F:DNA-binding transcription factor activity"/>
    <property type="evidence" value="ECO:0000318"/>
    <property type="project" value="GO_Central"/>
</dbReference>
<dbReference type="GO" id="GO:0001217">
    <property type="term" value="F:DNA-binding transcription repressor activity"/>
    <property type="evidence" value="ECO:0000353"/>
    <property type="project" value="CollecTF"/>
</dbReference>
<dbReference type="GO" id="GO:0000976">
    <property type="term" value="F:transcription cis-regulatory region binding"/>
    <property type="evidence" value="ECO:0000353"/>
    <property type="project" value="CollecTF"/>
</dbReference>
<dbReference type="GO" id="GO:0008270">
    <property type="term" value="F:zinc ion binding"/>
    <property type="evidence" value="ECO:0000318"/>
    <property type="project" value="GO_Central"/>
</dbReference>
<dbReference type="GO" id="GO:0045892">
    <property type="term" value="P:negative regulation of DNA-templated transcription"/>
    <property type="evidence" value="ECO:0000270"/>
    <property type="project" value="CollecTF"/>
</dbReference>
<dbReference type="GO" id="GO:1900705">
    <property type="term" value="P:negative regulation of siderophore biosynthetic process"/>
    <property type="evidence" value="ECO:0000318"/>
    <property type="project" value="GO_Central"/>
</dbReference>
<dbReference type="GO" id="GO:0045893">
    <property type="term" value="P:positive regulation of DNA-templated transcription"/>
    <property type="evidence" value="ECO:0000269"/>
    <property type="project" value="CollecTF"/>
</dbReference>
<dbReference type="CDD" id="cd07153">
    <property type="entry name" value="Fur_like"/>
    <property type="match status" value="1"/>
</dbReference>
<dbReference type="FunFam" id="1.10.10.10:FF:000007">
    <property type="entry name" value="Ferric uptake regulation protein"/>
    <property type="match status" value="1"/>
</dbReference>
<dbReference type="FunFam" id="3.30.1490.190:FF:000001">
    <property type="entry name" value="Ferric uptake regulation protein"/>
    <property type="match status" value="1"/>
</dbReference>
<dbReference type="Gene3D" id="3.30.1490.190">
    <property type="match status" value="1"/>
</dbReference>
<dbReference type="Gene3D" id="1.10.10.10">
    <property type="entry name" value="Winged helix-like DNA-binding domain superfamily/Winged helix DNA-binding domain"/>
    <property type="match status" value="1"/>
</dbReference>
<dbReference type="InterPro" id="IPR002481">
    <property type="entry name" value="FUR"/>
</dbReference>
<dbReference type="InterPro" id="IPR043135">
    <property type="entry name" value="Fur_C"/>
</dbReference>
<dbReference type="InterPro" id="IPR036388">
    <property type="entry name" value="WH-like_DNA-bd_sf"/>
</dbReference>
<dbReference type="InterPro" id="IPR036390">
    <property type="entry name" value="WH_DNA-bd_sf"/>
</dbReference>
<dbReference type="NCBIfam" id="NF006999">
    <property type="entry name" value="PRK09462.1"/>
    <property type="match status" value="1"/>
</dbReference>
<dbReference type="PANTHER" id="PTHR33202:SF2">
    <property type="entry name" value="FERRIC UPTAKE REGULATION PROTEIN"/>
    <property type="match status" value="1"/>
</dbReference>
<dbReference type="PANTHER" id="PTHR33202">
    <property type="entry name" value="ZINC UPTAKE REGULATION PROTEIN"/>
    <property type="match status" value="1"/>
</dbReference>
<dbReference type="Pfam" id="PF01475">
    <property type="entry name" value="FUR"/>
    <property type="match status" value="1"/>
</dbReference>
<dbReference type="SUPFAM" id="SSF46785">
    <property type="entry name" value="Winged helix' DNA-binding domain"/>
    <property type="match status" value="1"/>
</dbReference>
<protein>
    <recommendedName>
        <fullName>Ferric uptake regulation protein</fullName>
        <shortName>Ferric uptake regulator</shortName>
    </recommendedName>
</protein>
<accession>P33086</accession>
<accession>Q0WDQ0</accession>
<keyword id="KW-0963">Cytoplasm</keyword>
<keyword id="KW-0238">DNA-binding</keyword>
<keyword id="KW-0408">Iron</keyword>
<keyword id="KW-0479">Metal-binding</keyword>
<keyword id="KW-1185">Reference proteome</keyword>
<keyword id="KW-0678">Repressor</keyword>
<keyword id="KW-0804">Transcription</keyword>
<keyword id="KW-0805">Transcription regulation</keyword>
<keyword id="KW-0862">Zinc</keyword>
<reference key="1">
    <citation type="journal article" date="1992" name="Mol. Microbiol.">
        <title>Fur regulation in Yersinia species.</title>
        <authorList>
            <person name="Staggs T.M."/>
            <person name="Perry R.D."/>
        </authorList>
    </citation>
    <scope>NUCLEOTIDE SEQUENCE [GENOMIC DNA]</scope>
    <source>
        <strain>KIM6</strain>
    </source>
</reference>
<reference key="2">
    <citation type="journal article" date="1995" name="Mol. Microbiol.">
        <title>Fur regulation in Yersinia species.</title>
        <authorList>
            <person name="Staggs T.M."/>
            <person name="Perry R.D."/>
        </authorList>
    </citation>
    <scope>SEQUENCE REVISION TO 57-61</scope>
</reference>
<reference key="3">
    <citation type="submission" date="1995-06" db="EMBL/GenBank/DDBJ databases">
        <authorList>
            <person name="Bearden S.W."/>
        </authorList>
    </citation>
    <scope>NUCLEOTIDE SEQUENCE [GENOMIC DNA]</scope>
    <source>
        <strain>KIM6</strain>
    </source>
</reference>
<reference key="4">
    <citation type="journal article" date="2001" name="Nature">
        <title>Genome sequence of Yersinia pestis, the causative agent of plague.</title>
        <authorList>
            <person name="Parkhill J."/>
            <person name="Wren B.W."/>
            <person name="Thomson N.R."/>
            <person name="Titball R.W."/>
            <person name="Holden M.T.G."/>
            <person name="Prentice M.B."/>
            <person name="Sebaihia M."/>
            <person name="James K.D."/>
            <person name="Churcher C.M."/>
            <person name="Mungall K.L."/>
            <person name="Baker S."/>
            <person name="Basham D."/>
            <person name="Bentley S.D."/>
            <person name="Brooks K."/>
            <person name="Cerdeno-Tarraga A.-M."/>
            <person name="Chillingworth T."/>
            <person name="Cronin A."/>
            <person name="Davies R.M."/>
            <person name="Davis P."/>
            <person name="Dougan G."/>
            <person name="Feltwell T."/>
            <person name="Hamlin N."/>
            <person name="Holroyd S."/>
            <person name="Jagels K."/>
            <person name="Karlyshev A.V."/>
            <person name="Leather S."/>
            <person name="Moule S."/>
            <person name="Oyston P.C.F."/>
            <person name="Quail M.A."/>
            <person name="Rutherford K.M."/>
            <person name="Simmonds M."/>
            <person name="Skelton J."/>
            <person name="Stevens K."/>
            <person name="Whitehead S."/>
            <person name="Barrell B.G."/>
        </authorList>
    </citation>
    <scope>NUCLEOTIDE SEQUENCE [LARGE SCALE GENOMIC DNA]</scope>
    <source>
        <strain>CO-92 / Biovar Orientalis</strain>
    </source>
</reference>
<reference key="5">
    <citation type="journal article" date="2002" name="J. Bacteriol.">
        <title>Genome sequence of Yersinia pestis KIM.</title>
        <authorList>
            <person name="Deng W."/>
            <person name="Burland V."/>
            <person name="Plunkett G. III"/>
            <person name="Boutin A."/>
            <person name="Mayhew G.F."/>
            <person name="Liss P."/>
            <person name="Perna N.T."/>
            <person name="Rose D.J."/>
            <person name="Mau B."/>
            <person name="Zhou S."/>
            <person name="Schwartz D.C."/>
            <person name="Fetherston J.D."/>
            <person name="Lindler L.E."/>
            <person name="Brubaker R.R."/>
            <person name="Plano G.V."/>
            <person name="Straley S.C."/>
            <person name="McDonough K.A."/>
            <person name="Nilles M.L."/>
            <person name="Matson J.S."/>
            <person name="Blattner F.R."/>
            <person name="Perry R.D."/>
        </authorList>
    </citation>
    <scope>NUCLEOTIDE SEQUENCE [LARGE SCALE GENOMIC DNA]</scope>
    <source>
        <strain>KIM10+ / Biovar Mediaevalis</strain>
    </source>
</reference>
<reference key="6">
    <citation type="journal article" date="2004" name="DNA Res.">
        <title>Complete genome sequence of Yersinia pestis strain 91001, an isolate avirulent to humans.</title>
        <authorList>
            <person name="Song Y."/>
            <person name="Tong Z."/>
            <person name="Wang J."/>
            <person name="Wang L."/>
            <person name="Guo Z."/>
            <person name="Han Y."/>
            <person name="Zhang J."/>
            <person name="Pei D."/>
            <person name="Zhou D."/>
            <person name="Qin H."/>
            <person name="Pang X."/>
            <person name="Han Y."/>
            <person name="Zhai J."/>
            <person name="Li M."/>
            <person name="Cui B."/>
            <person name="Qi Z."/>
            <person name="Jin L."/>
            <person name="Dai R."/>
            <person name="Chen F."/>
            <person name="Li S."/>
            <person name="Ye C."/>
            <person name="Du Z."/>
            <person name="Lin W."/>
            <person name="Wang J."/>
            <person name="Yu J."/>
            <person name="Yang H."/>
            <person name="Wang J."/>
            <person name="Huang P."/>
            <person name="Yang R."/>
        </authorList>
    </citation>
    <scope>NUCLEOTIDE SEQUENCE [LARGE SCALE GENOMIC DNA]</scope>
    <source>
        <strain>91001 / Biovar Mediaevalis</strain>
    </source>
</reference>
<comment type="function">
    <text>Fur acts as a repressor, employing Fe(2+) as a cofactor to bind the operator of the iron transport operon.</text>
</comment>
<comment type="subunit">
    <text evidence="1">Homodimer.</text>
</comment>
<comment type="subcellular location">
    <subcellularLocation>
        <location evidence="1">Cytoplasm</location>
    </subcellularLocation>
</comment>
<comment type="similarity">
    <text evidence="2">Belongs to the Fur family.</text>
</comment>